<evidence type="ECO:0000255" key="1">
    <source>
        <dbReference type="HAMAP-Rule" id="MF_00270"/>
    </source>
</evidence>
<evidence type="ECO:0000305" key="2"/>
<gene>
    <name evidence="1" type="primary">rpsR</name>
    <name type="ordered locus">SPT_1477</name>
</gene>
<dbReference type="EMBL" id="CP000921">
    <property type="protein sequence ID" value="ACO24161.1"/>
    <property type="molecule type" value="Genomic_DNA"/>
</dbReference>
<dbReference type="RefSeq" id="WP_000068664.1">
    <property type="nucleotide sequence ID" value="NC_012469.1"/>
</dbReference>
<dbReference type="SMR" id="C1CSF7"/>
<dbReference type="GeneID" id="93963800"/>
<dbReference type="KEGG" id="snt:SPT_1477"/>
<dbReference type="HOGENOM" id="CLU_148710_2_2_9"/>
<dbReference type="GO" id="GO:0022627">
    <property type="term" value="C:cytosolic small ribosomal subunit"/>
    <property type="evidence" value="ECO:0007669"/>
    <property type="project" value="TreeGrafter"/>
</dbReference>
<dbReference type="GO" id="GO:0070181">
    <property type="term" value="F:small ribosomal subunit rRNA binding"/>
    <property type="evidence" value="ECO:0007669"/>
    <property type="project" value="TreeGrafter"/>
</dbReference>
<dbReference type="GO" id="GO:0003735">
    <property type="term" value="F:structural constituent of ribosome"/>
    <property type="evidence" value="ECO:0007669"/>
    <property type="project" value="InterPro"/>
</dbReference>
<dbReference type="GO" id="GO:0006412">
    <property type="term" value="P:translation"/>
    <property type="evidence" value="ECO:0007669"/>
    <property type="project" value="UniProtKB-UniRule"/>
</dbReference>
<dbReference type="FunFam" id="4.10.640.10:FF:000003">
    <property type="entry name" value="30S ribosomal protein S18"/>
    <property type="match status" value="1"/>
</dbReference>
<dbReference type="Gene3D" id="4.10.640.10">
    <property type="entry name" value="Ribosomal protein S18"/>
    <property type="match status" value="1"/>
</dbReference>
<dbReference type="HAMAP" id="MF_00270">
    <property type="entry name" value="Ribosomal_bS18"/>
    <property type="match status" value="1"/>
</dbReference>
<dbReference type="InterPro" id="IPR001648">
    <property type="entry name" value="Ribosomal_bS18"/>
</dbReference>
<dbReference type="InterPro" id="IPR018275">
    <property type="entry name" value="Ribosomal_bS18_CS"/>
</dbReference>
<dbReference type="InterPro" id="IPR036870">
    <property type="entry name" value="Ribosomal_bS18_sf"/>
</dbReference>
<dbReference type="NCBIfam" id="TIGR00165">
    <property type="entry name" value="S18"/>
    <property type="match status" value="1"/>
</dbReference>
<dbReference type="PANTHER" id="PTHR13479">
    <property type="entry name" value="30S RIBOSOMAL PROTEIN S18"/>
    <property type="match status" value="1"/>
</dbReference>
<dbReference type="PANTHER" id="PTHR13479:SF40">
    <property type="entry name" value="SMALL RIBOSOMAL SUBUNIT PROTEIN BS18M"/>
    <property type="match status" value="1"/>
</dbReference>
<dbReference type="Pfam" id="PF01084">
    <property type="entry name" value="Ribosomal_S18"/>
    <property type="match status" value="1"/>
</dbReference>
<dbReference type="PRINTS" id="PR00974">
    <property type="entry name" value="RIBOSOMALS18"/>
</dbReference>
<dbReference type="SUPFAM" id="SSF46911">
    <property type="entry name" value="Ribosomal protein S18"/>
    <property type="match status" value="1"/>
</dbReference>
<dbReference type="PROSITE" id="PS00057">
    <property type="entry name" value="RIBOSOMAL_S18"/>
    <property type="match status" value="1"/>
</dbReference>
<name>RS18_STRZT</name>
<sequence length="79" mass="9204">MAQQRRGGFKRRKKVDYIAANKIEYVDYKDTELLSRFVSERGKILPRRVTGTSAKNQRKVTTAIKRARVMALMPFVNED</sequence>
<comment type="function">
    <text evidence="1">Binds as a heterodimer with protein bS6 to the central domain of the 16S rRNA, where it helps stabilize the platform of the 30S subunit.</text>
</comment>
<comment type="subunit">
    <text evidence="1">Part of the 30S ribosomal subunit. Forms a tight heterodimer with protein bS6.</text>
</comment>
<comment type="similarity">
    <text evidence="1">Belongs to the bacterial ribosomal protein bS18 family.</text>
</comment>
<keyword id="KW-0687">Ribonucleoprotein</keyword>
<keyword id="KW-0689">Ribosomal protein</keyword>
<keyword id="KW-0694">RNA-binding</keyword>
<keyword id="KW-0699">rRNA-binding</keyword>
<accession>C1CSF7</accession>
<proteinExistence type="inferred from homology"/>
<feature type="chain" id="PRO_1000196535" description="Small ribosomal subunit protein bS18">
    <location>
        <begin position="1"/>
        <end position="79"/>
    </location>
</feature>
<reference key="1">
    <citation type="journal article" date="2010" name="Genome Biol.">
        <title>Structure and dynamics of the pan-genome of Streptococcus pneumoniae and closely related species.</title>
        <authorList>
            <person name="Donati C."/>
            <person name="Hiller N.L."/>
            <person name="Tettelin H."/>
            <person name="Muzzi A."/>
            <person name="Croucher N.J."/>
            <person name="Angiuoli S.V."/>
            <person name="Oggioni M."/>
            <person name="Dunning Hotopp J.C."/>
            <person name="Hu F.Z."/>
            <person name="Riley D.R."/>
            <person name="Covacci A."/>
            <person name="Mitchell T.J."/>
            <person name="Bentley S.D."/>
            <person name="Kilian M."/>
            <person name="Ehrlich G.D."/>
            <person name="Rappuoli R."/>
            <person name="Moxon E.R."/>
            <person name="Masignani V."/>
        </authorList>
    </citation>
    <scope>NUCLEOTIDE SEQUENCE [LARGE SCALE GENOMIC DNA]</scope>
    <source>
        <strain>Taiwan19F-14</strain>
    </source>
</reference>
<organism>
    <name type="scientific">Streptococcus pneumoniae (strain Taiwan19F-14)</name>
    <dbReference type="NCBI Taxonomy" id="487213"/>
    <lineage>
        <taxon>Bacteria</taxon>
        <taxon>Bacillati</taxon>
        <taxon>Bacillota</taxon>
        <taxon>Bacilli</taxon>
        <taxon>Lactobacillales</taxon>
        <taxon>Streptococcaceae</taxon>
        <taxon>Streptococcus</taxon>
    </lineage>
</organism>
<protein>
    <recommendedName>
        <fullName evidence="1">Small ribosomal subunit protein bS18</fullName>
    </recommendedName>
    <alternativeName>
        <fullName evidence="2">30S ribosomal protein S18</fullName>
    </alternativeName>
</protein>